<proteinExistence type="evidence at protein level"/>
<name>YCIH_ECOLI</name>
<feature type="chain" id="PRO_0000130595" description="Uncharacterized protein YciH">
    <location>
        <begin position="1"/>
        <end position="108"/>
    </location>
</feature>
<feature type="region of interest" description="Disordered" evidence="1">
    <location>
        <begin position="1"/>
        <end position="31"/>
    </location>
</feature>
<feature type="compositionally biased region" description="Polar residues" evidence="1">
    <location>
        <begin position="1"/>
        <end position="14"/>
    </location>
</feature>
<feature type="compositionally biased region" description="Basic and acidic residues" evidence="1">
    <location>
        <begin position="15"/>
        <end position="31"/>
    </location>
</feature>
<feature type="strand" evidence="3">
    <location>
        <begin position="32"/>
        <end position="37"/>
    </location>
</feature>
<feature type="strand" evidence="3">
    <location>
        <begin position="41"/>
        <end position="44"/>
    </location>
</feature>
<feature type="strand" evidence="3">
    <location>
        <begin position="48"/>
        <end position="51"/>
    </location>
</feature>
<feature type="helix" evidence="3">
    <location>
        <begin position="57"/>
        <end position="67"/>
    </location>
</feature>
<feature type="strand" evidence="3">
    <location>
        <begin position="70"/>
        <end position="73"/>
    </location>
</feature>
<feature type="strand" evidence="3">
    <location>
        <begin position="82"/>
        <end position="84"/>
    </location>
</feature>
<feature type="helix" evidence="3">
    <location>
        <begin position="89"/>
        <end position="99"/>
    </location>
</feature>
<evidence type="ECO:0000256" key="1">
    <source>
        <dbReference type="SAM" id="MobiDB-lite"/>
    </source>
</evidence>
<evidence type="ECO:0000305" key="2"/>
<evidence type="ECO:0007829" key="3">
    <source>
        <dbReference type="PDB" id="1D1R"/>
    </source>
</evidence>
<protein>
    <recommendedName>
        <fullName>Uncharacterized protein YciH</fullName>
    </recommendedName>
</protein>
<organism>
    <name type="scientific">Escherichia coli (strain K12)</name>
    <dbReference type="NCBI Taxonomy" id="83333"/>
    <lineage>
        <taxon>Bacteria</taxon>
        <taxon>Pseudomonadati</taxon>
        <taxon>Pseudomonadota</taxon>
        <taxon>Gammaproteobacteria</taxon>
        <taxon>Enterobacterales</taxon>
        <taxon>Enterobacteriaceae</taxon>
        <taxon>Escherichia</taxon>
    </lineage>
</organism>
<accession>P08245</accession>
<accession>P76033</accession>
<keyword id="KW-0002">3D-structure</keyword>
<keyword id="KW-0648">Protein biosynthesis</keyword>
<keyword id="KW-1185">Reference proteome</keyword>
<keyword id="KW-0810">Translation regulation</keyword>
<sequence>MSDSNSRLVYSTETGRIDEPKAAPVRPKGDGVVRIQRQTSGRKGKGVCLITGVDLDDAELTKLAAELKKKCGCGGAVKDGVIEIQGDKRDLLKSLLEAKGMKVKLAGG</sequence>
<gene>
    <name type="primary">yciH</name>
    <name type="ordered locus">b1282</name>
    <name type="ordered locus">JW1274</name>
</gene>
<dbReference type="EMBL" id="J02768">
    <property type="protein sequence ID" value="AAA24484.1"/>
    <property type="molecule type" value="Genomic_DNA"/>
</dbReference>
<dbReference type="EMBL" id="U00096">
    <property type="protein sequence ID" value="AAC74364.2"/>
    <property type="molecule type" value="Genomic_DNA"/>
</dbReference>
<dbReference type="EMBL" id="AP009048">
    <property type="protein sequence ID" value="BAA14836.1"/>
    <property type="molecule type" value="Genomic_DNA"/>
</dbReference>
<dbReference type="PIR" id="E64876">
    <property type="entry name" value="Q3ECPF"/>
</dbReference>
<dbReference type="RefSeq" id="NP_415798.2">
    <property type="nucleotide sequence ID" value="NC_000913.3"/>
</dbReference>
<dbReference type="RefSeq" id="WP_001295580.1">
    <property type="nucleotide sequence ID" value="NZ_STEB01000005.1"/>
</dbReference>
<dbReference type="PDB" id="1D1R">
    <property type="method" value="NMR"/>
    <property type="chains" value="A=1-108"/>
</dbReference>
<dbReference type="PDBsum" id="1D1R"/>
<dbReference type="SMR" id="P08245"/>
<dbReference type="BioGRID" id="4259544">
    <property type="interactions" value="102"/>
</dbReference>
<dbReference type="DIP" id="DIP-11582N"/>
<dbReference type="FunCoup" id="P08245">
    <property type="interactions" value="242"/>
</dbReference>
<dbReference type="IntAct" id="P08245">
    <property type="interactions" value="48"/>
</dbReference>
<dbReference type="STRING" id="511145.b1282"/>
<dbReference type="jPOST" id="P08245"/>
<dbReference type="PaxDb" id="511145-b1282"/>
<dbReference type="EnsemblBacteria" id="AAC74364">
    <property type="protein sequence ID" value="AAC74364"/>
    <property type="gene ID" value="b1282"/>
</dbReference>
<dbReference type="GeneID" id="93775405"/>
<dbReference type="GeneID" id="947058"/>
<dbReference type="KEGG" id="ecj:JW1274"/>
<dbReference type="KEGG" id="eco:b1282"/>
<dbReference type="KEGG" id="ecoc:C3026_07525"/>
<dbReference type="PATRIC" id="fig|1411691.4.peg.998"/>
<dbReference type="EchoBASE" id="EB1118"/>
<dbReference type="eggNOG" id="COG0023">
    <property type="taxonomic scope" value="Bacteria"/>
</dbReference>
<dbReference type="HOGENOM" id="CLU_082805_4_0_6"/>
<dbReference type="InParanoid" id="P08245"/>
<dbReference type="OMA" id="KSKCGVG"/>
<dbReference type="OrthoDB" id="9792915at2"/>
<dbReference type="PhylomeDB" id="P08245"/>
<dbReference type="BioCyc" id="EcoCyc:EG11128-MONOMER"/>
<dbReference type="EvolutionaryTrace" id="P08245"/>
<dbReference type="PRO" id="PR:P08245"/>
<dbReference type="Proteomes" id="UP000000625">
    <property type="component" value="Chromosome"/>
</dbReference>
<dbReference type="GO" id="GO:0043024">
    <property type="term" value="F:ribosomal small subunit binding"/>
    <property type="evidence" value="ECO:0000314"/>
    <property type="project" value="EcoCyc"/>
</dbReference>
<dbReference type="GO" id="GO:0003743">
    <property type="term" value="F:translation initiation factor activity"/>
    <property type="evidence" value="ECO:0007669"/>
    <property type="project" value="InterPro"/>
</dbReference>
<dbReference type="GO" id="GO:0001731">
    <property type="term" value="P:formation of translation preinitiation complex"/>
    <property type="evidence" value="ECO:0000318"/>
    <property type="project" value="GO_Central"/>
</dbReference>
<dbReference type="GO" id="GO:0006417">
    <property type="term" value="P:regulation of translation"/>
    <property type="evidence" value="ECO:0007669"/>
    <property type="project" value="UniProtKB-KW"/>
</dbReference>
<dbReference type="GO" id="GO:0002188">
    <property type="term" value="P:translation reinitiation"/>
    <property type="evidence" value="ECO:0000318"/>
    <property type="project" value="GO_Central"/>
</dbReference>
<dbReference type="CDD" id="cd11567">
    <property type="entry name" value="YciH_like"/>
    <property type="match status" value="1"/>
</dbReference>
<dbReference type="DisProt" id="DP00790"/>
<dbReference type="FunFam" id="3.30.780.10:FF:000002">
    <property type="entry name" value="Stress response translation initiation inhibitor"/>
    <property type="match status" value="1"/>
</dbReference>
<dbReference type="Gene3D" id="3.30.780.10">
    <property type="entry name" value="SUI1-like domain"/>
    <property type="match status" value="1"/>
</dbReference>
<dbReference type="InterPro" id="IPR050318">
    <property type="entry name" value="DENR/SUI1_TIF"/>
</dbReference>
<dbReference type="InterPro" id="IPR001950">
    <property type="entry name" value="SUI1"/>
</dbReference>
<dbReference type="InterPro" id="IPR005872">
    <property type="entry name" value="SUI1_arc_bac"/>
</dbReference>
<dbReference type="InterPro" id="IPR036877">
    <property type="entry name" value="SUI1_dom_sf"/>
</dbReference>
<dbReference type="NCBIfam" id="NF006536">
    <property type="entry name" value="PRK09019.1"/>
    <property type="match status" value="1"/>
</dbReference>
<dbReference type="NCBIfam" id="TIGR01158">
    <property type="entry name" value="SUI1_rel"/>
    <property type="match status" value="1"/>
</dbReference>
<dbReference type="PANTHER" id="PTHR12789:SF0">
    <property type="entry name" value="DENSITY-REGULATED PROTEIN"/>
    <property type="match status" value="1"/>
</dbReference>
<dbReference type="PANTHER" id="PTHR12789">
    <property type="entry name" value="DENSITY-REGULATED PROTEIN HOMOLOG"/>
    <property type="match status" value="1"/>
</dbReference>
<dbReference type="Pfam" id="PF01253">
    <property type="entry name" value="SUI1"/>
    <property type="match status" value="1"/>
</dbReference>
<dbReference type="PIRSF" id="PIRSF037511">
    <property type="entry name" value="Transl_init_SUI1_pro"/>
    <property type="match status" value="1"/>
</dbReference>
<dbReference type="SUPFAM" id="SSF55159">
    <property type="entry name" value="eIF1-like"/>
    <property type="match status" value="1"/>
</dbReference>
<dbReference type="PROSITE" id="PS50296">
    <property type="entry name" value="SUI1"/>
    <property type="match status" value="1"/>
</dbReference>
<comment type="similarity">
    <text evidence="2">Belongs to the SUI1 family.</text>
</comment>
<reference key="1">
    <citation type="journal article" date="1987" name="J. Biol. Chem.">
        <title>Nucleotide sequence and characterization of the pyrF operon of Escherichia coli K12.</title>
        <authorList>
            <person name="Turnbough C.L. Jr."/>
            <person name="Kerr K.H."/>
            <person name="Funderburg W.R."/>
            <person name="Donahue J.P."/>
            <person name="Powell F.E."/>
        </authorList>
    </citation>
    <scope>NUCLEOTIDE SEQUENCE [GENOMIC DNA]</scope>
    <source>
        <strain>K12</strain>
    </source>
</reference>
<reference key="2">
    <citation type="journal article" date="1996" name="DNA Res.">
        <title>A 570-kb DNA sequence of the Escherichia coli K-12 genome corresponding to the 28.0-40.1 min region on the linkage map.</title>
        <authorList>
            <person name="Aiba H."/>
            <person name="Baba T."/>
            <person name="Fujita K."/>
            <person name="Hayashi K."/>
            <person name="Inada T."/>
            <person name="Isono K."/>
            <person name="Itoh T."/>
            <person name="Kasai H."/>
            <person name="Kashimoto K."/>
            <person name="Kimura S."/>
            <person name="Kitakawa M."/>
            <person name="Kitagawa M."/>
            <person name="Makino K."/>
            <person name="Miki T."/>
            <person name="Mizobuchi K."/>
            <person name="Mori H."/>
            <person name="Mori T."/>
            <person name="Motomura K."/>
            <person name="Nakade S."/>
            <person name="Nakamura Y."/>
            <person name="Nashimoto H."/>
            <person name="Nishio Y."/>
            <person name="Oshima T."/>
            <person name="Saito N."/>
            <person name="Sampei G."/>
            <person name="Seki Y."/>
            <person name="Sivasundaram S."/>
            <person name="Tagami H."/>
            <person name="Takeda J."/>
            <person name="Takemoto K."/>
            <person name="Takeuchi Y."/>
            <person name="Wada C."/>
            <person name="Yamamoto Y."/>
            <person name="Horiuchi T."/>
        </authorList>
    </citation>
    <scope>NUCLEOTIDE SEQUENCE [LARGE SCALE GENOMIC DNA]</scope>
    <source>
        <strain>K12 / W3110 / ATCC 27325 / DSM 5911</strain>
    </source>
</reference>
<reference key="3">
    <citation type="journal article" date="1997" name="Science">
        <title>The complete genome sequence of Escherichia coli K-12.</title>
        <authorList>
            <person name="Blattner F.R."/>
            <person name="Plunkett G. III"/>
            <person name="Bloch C.A."/>
            <person name="Perna N.T."/>
            <person name="Burland V."/>
            <person name="Riley M."/>
            <person name="Collado-Vides J."/>
            <person name="Glasner J.D."/>
            <person name="Rode C.K."/>
            <person name="Mayhew G.F."/>
            <person name="Gregor J."/>
            <person name="Davis N.W."/>
            <person name="Kirkpatrick H.A."/>
            <person name="Goeden M.A."/>
            <person name="Rose D.J."/>
            <person name="Mau B."/>
            <person name="Shao Y."/>
        </authorList>
    </citation>
    <scope>NUCLEOTIDE SEQUENCE [LARGE SCALE GENOMIC DNA]</scope>
    <source>
        <strain>K12 / MG1655 / ATCC 47076</strain>
    </source>
</reference>
<reference key="4">
    <citation type="journal article" date="2006" name="Mol. Syst. Biol.">
        <title>Highly accurate genome sequences of Escherichia coli K-12 strains MG1655 and W3110.</title>
        <authorList>
            <person name="Hayashi K."/>
            <person name="Morooka N."/>
            <person name="Yamamoto Y."/>
            <person name="Fujita K."/>
            <person name="Isono K."/>
            <person name="Choi S."/>
            <person name="Ohtsubo E."/>
            <person name="Baba T."/>
            <person name="Wanner B.L."/>
            <person name="Mori H."/>
            <person name="Horiuchi T."/>
        </authorList>
    </citation>
    <scope>NUCLEOTIDE SEQUENCE [LARGE SCALE GENOMIC DNA]</scope>
    <source>
        <strain>K12 / W3110 / ATCC 27325 / DSM 5911</strain>
    </source>
</reference>
<reference key="5">
    <citation type="journal article" date="1999" name="Nucleic Acids Res.">
        <title>A phylogenetic approach to target selection for structural genomics: solution structure of YciH.</title>
        <authorList>
            <person name="Cort J.R."/>
            <person name="Koonin E.V."/>
            <person name="Bash P.A."/>
            <person name="Kennedy M.A."/>
        </authorList>
    </citation>
    <scope>STRUCTURE BY NMR</scope>
</reference>